<sequence length="501" mass="55166">MTVQSIMFQGTASDAGKSWLAAAVCRILANRGQKVAPFKSQNMALNSFITEKGDEMGRAQVFQAEAAKVKPDVRMNPILLKPSTDKDSQVIVMGKVLKNMDAVSYYQFKRELIPQIMMAYNTLADENDVIVLEGAGSPAEINLNENDIVNMGMARMADAPVILVADIDKGGVFASIYGTIKLMPREDQQRIKGIIINKFRGDKSLLESGNKMIEKLTGIPVIGVLPMSSIDIDEEDSVSLIRKPRQKDTQKDLDVAVIDLDKISNFTDIHSLEIQPDVSVRYVLTAEELGTPDLLIIPGSKNTNADLVALRKNGIAEGILRAHKDGSMIVGICGGYQILGQMLYDPTGIESPIKEQKGLGLLDTETTFNEKKTTTQAVAKRNNYILKGYEIHMGTTKRGLNSTPFSTIQETNGQPENREDGAVSTDGTVIGTYLHGIFDNPYWTRHLLNQLRVAKGMAPLVDTTVSISGYKDQQYEKLAQLFAQNVDMDKFNQILQDSTKE</sequence>
<reference key="1">
    <citation type="journal article" date="2011" name="PLoS Genet.">
        <title>The evolution of host specialization in the vertebrate gut symbiont Lactobacillus reuteri.</title>
        <authorList>
            <person name="Frese S.A."/>
            <person name="Benson A.K."/>
            <person name="Tannock G.W."/>
            <person name="Loach D.M."/>
            <person name="Kim J."/>
            <person name="Zhang M."/>
            <person name="Oh P.L."/>
            <person name="Heng N.C."/>
            <person name="Patil P.B."/>
            <person name="Juge N."/>
            <person name="Mackenzie D.A."/>
            <person name="Pearson B.M."/>
            <person name="Lapidus A."/>
            <person name="Dalin E."/>
            <person name="Tice H."/>
            <person name="Goltsman E."/>
            <person name="Land M."/>
            <person name="Hauser L."/>
            <person name="Ivanova N."/>
            <person name="Kyrpides N.C."/>
            <person name="Walter J."/>
        </authorList>
    </citation>
    <scope>NUCLEOTIDE SEQUENCE [LARGE SCALE GENOMIC DNA]</scope>
    <source>
        <strain>DSM 20016</strain>
    </source>
</reference>
<evidence type="ECO:0000255" key="1">
    <source>
        <dbReference type="HAMAP-Rule" id="MF_00028"/>
    </source>
</evidence>
<dbReference type="EMBL" id="CP000705">
    <property type="protein sequence ID" value="ABQ83944.1"/>
    <property type="molecule type" value="Genomic_DNA"/>
</dbReference>
<dbReference type="RefSeq" id="WP_003669125.1">
    <property type="nucleotide sequence ID" value="NC_009513.1"/>
</dbReference>
<dbReference type="SMR" id="A5VM70"/>
<dbReference type="STRING" id="557436.Lreu_1705"/>
<dbReference type="KEGG" id="lre:Lreu_1705"/>
<dbReference type="eggNOG" id="COG1492">
    <property type="taxonomic scope" value="Bacteria"/>
</dbReference>
<dbReference type="HOGENOM" id="CLU_019250_2_2_9"/>
<dbReference type="UniPathway" id="UPA00148"/>
<dbReference type="Proteomes" id="UP000001991">
    <property type="component" value="Chromosome"/>
</dbReference>
<dbReference type="GO" id="GO:0015420">
    <property type="term" value="F:ABC-type vitamin B12 transporter activity"/>
    <property type="evidence" value="ECO:0007669"/>
    <property type="project" value="UniProtKB-UniRule"/>
</dbReference>
<dbReference type="GO" id="GO:0003824">
    <property type="term" value="F:catalytic activity"/>
    <property type="evidence" value="ECO:0007669"/>
    <property type="project" value="InterPro"/>
</dbReference>
<dbReference type="GO" id="GO:0009236">
    <property type="term" value="P:cobalamin biosynthetic process"/>
    <property type="evidence" value="ECO:0007669"/>
    <property type="project" value="UniProtKB-UniRule"/>
</dbReference>
<dbReference type="CDD" id="cd05389">
    <property type="entry name" value="CobQ_N"/>
    <property type="match status" value="1"/>
</dbReference>
<dbReference type="CDD" id="cd01750">
    <property type="entry name" value="GATase1_CobQ"/>
    <property type="match status" value="1"/>
</dbReference>
<dbReference type="Gene3D" id="3.40.50.880">
    <property type="match status" value="1"/>
</dbReference>
<dbReference type="Gene3D" id="3.40.50.300">
    <property type="entry name" value="P-loop containing nucleotide triphosphate hydrolases"/>
    <property type="match status" value="1"/>
</dbReference>
<dbReference type="HAMAP" id="MF_00028">
    <property type="entry name" value="CobQ"/>
    <property type="match status" value="1"/>
</dbReference>
<dbReference type="InterPro" id="IPR029062">
    <property type="entry name" value="Class_I_gatase-like"/>
</dbReference>
<dbReference type="InterPro" id="IPR002586">
    <property type="entry name" value="CobQ/CobB/MinD/ParA_Nub-bd_dom"/>
</dbReference>
<dbReference type="InterPro" id="IPR033949">
    <property type="entry name" value="CobQ_GATase1"/>
</dbReference>
<dbReference type="InterPro" id="IPR047045">
    <property type="entry name" value="CobQ_N"/>
</dbReference>
<dbReference type="InterPro" id="IPR004459">
    <property type="entry name" value="CobQ_synth"/>
</dbReference>
<dbReference type="InterPro" id="IPR011698">
    <property type="entry name" value="GATase_3"/>
</dbReference>
<dbReference type="InterPro" id="IPR027417">
    <property type="entry name" value="P-loop_NTPase"/>
</dbReference>
<dbReference type="NCBIfam" id="TIGR00313">
    <property type="entry name" value="cobQ"/>
    <property type="match status" value="1"/>
</dbReference>
<dbReference type="NCBIfam" id="NF001989">
    <property type="entry name" value="PRK00784.1"/>
    <property type="match status" value="1"/>
</dbReference>
<dbReference type="PANTHER" id="PTHR21343:SF1">
    <property type="entry name" value="COBYRIC ACID SYNTHASE"/>
    <property type="match status" value="1"/>
</dbReference>
<dbReference type="PANTHER" id="PTHR21343">
    <property type="entry name" value="DETHIOBIOTIN SYNTHETASE"/>
    <property type="match status" value="1"/>
</dbReference>
<dbReference type="Pfam" id="PF01656">
    <property type="entry name" value="CbiA"/>
    <property type="match status" value="1"/>
</dbReference>
<dbReference type="Pfam" id="PF07685">
    <property type="entry name" value="GATase_3"/>
    <property type="match status" value="1"/>
</dbReference>
<dbReference type="SUPFAM" id="SSF52317">
    <property type="entry name" value="Class I glutamine amidotransferase-like"/>
    <property type="match status" value="1"/>
</dbReference>
<dbReference type="SUPFAM" id="SSF52540">
    <property type="entry name" value="P-loop containing nucleoside triphosphate hydrolases"/>
    <property type="match status" value="1"/>
</dbReference>
<dbReference type="PROSITE" id="PS51274">
    <property type="entry name" value="GATASE_COBBQ"/>
    <property type="match status" value="1"/>
</dbReference>
<proteinExistence type="inferred from homology"/>
<name>COBQ_LIMRD</name>
<protein>
    <recommendedName>
        <fullName evidence="1">Cobyric acid synthase</fullName>
    </recommendedName>
</protein>
<comment type="function">
    <text evidence="1">Catalyzes amidations at positions B, D, E, and G on adenosylcobyrinic A,C-diamide. NH(2) groups are provided by glutamine, and one molecule of ATP is hydrogenolyzed for each amidation.</text>
</comment>
<comment type="pathway">
    <text evidence="1">Cofactor biosynthesis; adenosylcobalamin biosynthesis.</text>
</comment>
<comment type="similarity">
    <text evidence="1">Belongs to the CobB/CobQ family. CobQ subfamily.</text>
</comment>
<keyword id="KW-0169">Cobalamin biosynthesis</keyword>
<keyword id="KW-0315">Glutamine amidotransferase</keyword>
<keyword id="KW-1185">Reference proteome</keyword>
<gene>
    <name evidence="1" type="primary">cobQ</name>
    <name type="ordered locus">Lreu_1705</name>
</gene>
<accession>A5VM70</accession>
<feature type="chain" id="PRO_0000332344" description="Cobyric acid synthase">
    <location>
        <begin position="1"/>
        <end position="501"/>
    </location>
</feature>
<feature type="domain" description="GATase cobBQ-type" evidence="1">
    <location>
        <begin position="252"/>
        <end position="443"/>
    </location>
</feature>
<feature type="active site" description="Nucleophile" evidence="1">
    <location>
        <position position="333"/>
    </location>
</feature>
<feature type="active site" evidence="1">
    <location>
        <position position="435"/>
    </location>
</feature>
<organism>
    <name type="scientific">Limosilactobacillus reuteri (strain DSM 20016)</name>
    <name type="common">Lactobacillus reuteri</name>
    <dbReference type="NCBI Taxonomy" id="557436"/>
    <lineage>
        <taxon>Bacteria</taxon>
        <taxon>Bacillati</taxon>
        <taxon>Bacillota</taxon>
        <taxon>Bacilli</taxon>
        <taxon>Lactobacillales</taxon>
        <taxon>Lactobacillaceae</taxon>
        <taxon>Limosilactobacillus</taxon>
    </lineage>
</organism>